<sequence length="1214" mass="136447">MKQPIMADGPRCKRRKQANPRRKNVVNYDNVVDTGSETDEEDKLHIAEDDGIANPLDQETSPASVPNHESSPHVSQALLPREEEEDEIREGGVEHPWHNNEILQASVDGPEEMKEDYDTMGPEATIQTAINNGTVKNANCTSDFEEYFAKRKLEERDGHAVSIEEYLQRSDTAIIYPEAPEELSRLGTPEANGQEENDLPPGTPDAFAQLLTCPYCDRGYKRLTSLKEHIKYRHEKNEENFSCPLCSYTFAYRTQLERHMVTHKPGTDQHQMLTQGAGNRKFKCTECGKAFKYKHHLKEHLRIHSGEKPYECPNCKKRFSHSGSYSSHISSKKCIGLISVNGRMRNNIKTGSSPNSVSSSPTNSAITQLRNKLENGKPLSMSEQTGLLKIKTEPLDFNDYKVLMATHGFSGTSPFMNGGLGATSPLGVHPSAQSPMQHLGVGMEAPLLGFPTMNSNLSEVQKVLQIVDNTVSRQKMDCKAEEISKLKGYHMKDPCSQPEEQGVTSPNIPPVGLPVVSHNGATKSIIDYTLEKVNEAKACLQSLTTDSRRQISNIKKEKLRTLIDLVTDDKMIENHNISTPFSCQFCKESFPGPIPLHQHERYLCKMNEEIKAVLQPHENIVPNKAGVFVDNKALLLSSVLSEKGMTSPINPYKDHMSVLKAYYAMNMEPNSDELLKISIAVGLPQEFVKEWFEQRKVYQYSNSRSPSLERSSKPLAPNSNPPTKDSLLPRSPVKPMDSITSPSIAELHNSVTNCDPPLRLTKPSHFTNIKPVEKLDHSRSNTPSPLNLSSTSSKNSHSSSYTPNSFSSEELQAEPLDLSLPKQMKEPKSIIATKNKTKASSISLDHNSVSSSSENSDEPLNLTFIKKEFSNSNNLDNKSTNPVFSMNPFSAKPLYTALPPQSAFPPATFMPPVQTSIPGLRPYPGLDQMSFLPHMAYTYPTGAATFADMQQRRKYQRKQGFQGELLDGAQDYMSGLDDMTDSDSCLSRKKIKKTESGMYACDLCDKTFQKSSSLLRHKYEHTGKRPHQCQICKKAFKHKHHLIEHSRLHSGEKPYQCDKCGKRFSHSGSYSQHMNHRYSYCKREAEEREAAEREAREKGHLEPTELLMNRAYLQSITPQGYSDSEERESMPRDGESEKEHEKEGEDGYGKLGRQDGDEEFEEEEEESENKSMDTDPETIRDEEETGDHSMDDSSEDGKMETKSDHEEDNMEDGM</sequence>
<name>ZEB2_HUMAN</name>
<evidence type="ECO:0000250" key="1"/>
<evidence type="ECO:0000250" key="2">
    <source>
        <dbReference type="UniProtKB" id="Q9R0G7"/>
    </source>
</evidence>
<evidence type="ECO:0000255" key="3">
    <source>
        <dbReference type="PROSITE-ProRule" id="PRU00042"/>
    </source>
</evidence>
<evidence type="ECO:0000256" key="4">
    <source>
        <dbReference type="SAM" id="MobiDB-lite"/>
    </source>
</evidence>
<evidence type="ECO:0000269" key="5">
    <source>
    </source>
</evidence>
<evidence type="ECO:0000269" key="6">
    <source>
    </source>
</evidence>
<evidence type="ECO:0000269" key="7">
    <source>
    </source>
</evidence>
<evidence type="ECO:0000269" key="8">
    <source>
    </source>
</evidence>
<evidence type="ECO:0000269" key="9">
    <source>
    </source>
</evidence>
<evidence type="ECO:0000269" key="10">
    <source>
    </source>
</evidence>
<evidence type="ECO:0000269" key="11">
    <source>
    </source>
</evidence>
<evidence type="ECO:0000269" key="12">
    <source>
    </source>
</evidence>
<evidence type="ECO:0000303" key="13">
    <source>
    </source>
</evidence>
<evidence type="ECO:0000303" key="14">
    <source>
    </source>
</evidence>
<evidence type="ECO:0000303" key="15">
    <source>
    </source>
</evidence>
<evidence type="ECO:0000305" key="16"/>
<evidence type="ECO:0000312" key="17">
    <source>
        <dbReference type="HGNC" id="HGNC:14881"/>
    </source>
</evidence>
<evidence type="ECO:0007744" key="18">
    <source>
    </source>
</evidence>
<evidence type="ECO:0007744" key="19">
    <source>
    </source>
</evidence>
<evidence type="ECO:0007744" key="20">
    <source>
    </source>
</evidence>
<evidence type="ECO:0007744" key="21">
    <source>
    </source>
</evidence>
<evidence type="ECO:0007744" key="22">
    <source>
    </source>
</evidence>
<evidence type="ECO:0007829" key="23">
    <source>
        <dbReference type="PDB" id="2DA7"/>
    </source>
</evidence>
<accession>O60315</accession>
<accession>A0JP09</accession>
<accession>B7Z2P2</accession>
<accession>F5H814</accession>
<accession>Q9UED1</accession>
<gene>
    <name evidence="17" type="primary">ZEB2</name>
    <name evidence="15" type="synonym">KIAA0569</name>
    <name evidence="13" type="synonym">SIP1</name>
    <name type="synonym">ZFHX1B</name>
    <name type="synonym">ZFX1B</name>
    <name type="ORF">HRIHFB2411</name>
</gene>
<reference key="1">
    <citation type="journal article" date="2001" name="Hum. Mol. Genet.">
        <title>Loss-of-function mutations in SIP1 Smad interacting protein 1 result in a syndromic Hirschsprung disease.</title>
        <authorList>
            <person name="Cacheux V."/>
            <person name="Dastot-Le Moal F."/>
            <person name="Kaeaeriaeinen H."/>
            <person name="Bondurand N."/>
            <person name="Rintala R."/>
            <person name="Boissier B."/>
            <person name="Wilson M."/>
            <person name="Mowat D."/>
            <person name="Goossens M."/>
        </authorList>
    </citation>
    <scope>NUCLEOTIDE SEQUENCE [GENOMIC DNA]</scope>
    <scope>INVOLVEMENT IN MOWS</scope>
</reference>
<reference key="2">
    <citation type="journal article" date="2001" name="Nat. Genet.">
        <title>Mutations in SIP1, encoding Smad interacting protein 1, cause a form of Hirschsprung disease.</title>
        <authorList>
            <person name="Wakamatsu N."/>
            <person name="Yamada Y."/>
            <person name="Yamada K."/>
            <person name="Ono T."/>
            <person name="Nomura N."/>
            <person name="Taniguchi H."/>
            <person name="Kitoh H."/>
            <person name="Mutoh N."/>
            <person name="Yamanaka T."/>
            <person name="Mushiake K."/>
            <person name="Kato K."/>
            <person name="Sonta S."/>
            <person name="Nagaya M."/>
        </authorList>
    </citation>
    <scope>NUCLEOTIDE SEQUENCE [MRNA] (ISOFORM 1)</scope>
</reference>
<reference key="3">
    <citation type="journal article" date="1998" name="DNA Res.">
        <title>Prediction of the coding sequences of unidentified human genes. IX. The complete sequences of 100 new cDNA clones from brain which can code for large proteins in vitro.</title>
        <authorList>
            <person name="Nagase T."/>
            <person name="Ishikawa K."/>
            <person name="Miyajima N."/>
            <person name="Tanaka A."/>
            <person name="Kotani H."/>
            <person name="Nomura N."/>
            <person name="Ohara O."/>
        </authorList>
    </citation>
    <scope>NUCLEOTIDE SEQUENCE [LARGE SCALE MRNA] (ISOFORM 1)</scope>
    <source>
        <tissue>Brain</tissue>
    </source>
</reference>
<reference key="4">
    <citation type="journal article" date="2004" name="Nat. Genet.">
        <title>Complete sequencing and characterization of 21,243 full-length human cDNAs.</title>
        <authorList>
            <person name="Ota T."/>
            <person name="Suzuki Y."/>
            <person name="Nishikawa T."/>
            <person name="Otsuki T."/>
            <person name="Sugiyama T."/>
            <person name="Irie R."/>
            <person name="Wakamatsu A."/>
            <person name="Hayashi K."/>
            <person name="Sato H."/>
            <person name="Nagai K."/>
            <person name="Kimura K."/>
            <person name="Makita H."/>
            <person name="Sekine M."/>
            <person name="Obayashi M."/>
            <person name="Nishi T."/>
            <person name="Shibahara T."/>
            <person name="Tanaka T."/>
            <person name="Ishii S."/>
            <person name="Yamamoto J."/>
            <person name="Saito K."/>
            <person name="Kawai Y."/>
            <person name="Isono Y."/>
            <person name="Nakamura Y."/>
            <person name="Nagahari K."/>
            <person name="Murakami K."/>
            <person name="Yasuda T."/>
            <person name="Iwayanagi T."/>
            <person name="Wagatsuma M."/>
            <person name="Shiratori A."/>
            <person name="Sudo H."/>
            <person name="Hosoiri T."/>
            <person name="Kaku Y."/>
            <person name="Kodaira H."/>
            <person name="Kondo H."/>
            <person name="Sugawara M."/>
            <person name="Takahashi M."/>
            <person name="Kanda K."/>
            <person name="Yokoi T."/>
            <person name="Furuya T."/>
            <person name="Kikkawa E."/>
            <person name="Omura Y."/>
            <person name="Abe K."/>
            <person name="Kamihara K."/>
            <person name="Katsuta N."/>
            <person name="Sato K."/>
            <person name="Tanikawa M."/>
            <person name="Yamazaki M."/>
            <person name="Ninomiya K."/>
            <person name="Ishibashi T."/>
            <person name="Yamashita H."/>
            <person name="Murakawa K."/>
            <person name="Fujimori K."/>
            <person name="Tanai H."/>
            <person name="Kimata M."/>
            <person name="Watanabe M."/>
            <person name="Hiraoka S."/>
            <person name="Chiba Y."/>
            <person name="Ishida S."/>
            <person name="Ono Y."/>
            <person name="Takiguchi S."/>
            <person name="Watanabe S."/>
            <person name="Yosida M."/>
            <person name="Hotuta T."/>
            <person name="Kusano J."/>
            <person name="Kanehori K."/>
            <person name="Takahashi-Fujii A."/>
            <person name="Hara H."/>
            <person name="Tanase T.-O."/>
            <person name="Nomura Y."/>
            <person name="Togiya S."/>
            <person name="Komai F."/>
            <person name="Hara R."/>
            <person name="Takeuchi K."/>
            <person name="Arita M."/>
            <person name="Imose N."/>
            <person name="Musashino K."/>
            <person name="Yuuki H."/>
            <person name="Oshima A."/>
            <person name="Sasaki N."/>
            <person name="Aotsuka S."/>
            <person name="Yoshikawa Y."/>
            <person name="Matsunawa H."/>
            <person name="Ichihara T."/>
            <person name="Shiohata N."/>
            <person name="Sano S."/>
            <person name="Moriya S."/>
            <person name="Momiyama H."/>
            <person name="Satoh N."/>
            <person name="Takami S."/>
            <person name="Terashima Y."/>
            <person name="Suzuki O."/>
            <person name="Nakagawa S."/>
            <person name="Senoh A."/>
            <person name="Mizoguchi H."/>
            <person name="Goto Y."/>
            <person name="Shimizu F."/>
            <person name="Wakebe H."/>
            <person name="Hishigaki H."/>
            <person name="Watanabe T."/>
            <person name="Sugiyama A."/>
            <person name="Takemoto M."/>
            <person name="Kawakami B."/>
            <person name="Yamazaki M."/>
            <person name="Watanabe K."/>
            <person name="Kumagai A."/>
            <person name="Itakura S."/>
            <person name="Fukuzumi Y."/>
            <person name="Fujimori Y."/>
            <person name="Komiyama M."/>
            <person name="Tashiro H."/>
            <person name="Tanigami A."/>
            <person name="Fujiwara T."/>
            <person name="Ono T."/>
            <person name="Yamada K."/>
            <person name="Fujii Y."/>
            <person name="Ozaki K."/>
            <person name="Hirao M."/>
            <person name="Ohmori Y."/>
            <person name="Kawabata A."/>
            <person name="Hikiji T."/>
            <person name="Kobatake N."/>
            <person name="Inagaki H."/>
            <person name="Ikema Y."/>
            <person name="Okamoto S."/>
            <person name="Okitani R."/>
            <person name="Kawakami T."/>
            <person name="Noguchi S."/>
            <person name="Itoh T."/>
            <person name="Shigeta K."/>
            <person name="Senba T."/>
            <person name="Matsumura K."/>
            <person name="Nakajima Y."/>
            <person name="Mizuno T."/>
            <person name="Morinaga M."/>
            <person name="Sasaki M."/>
            <person name="Togashi T."/>
            <person name="Oyama M."/>
            <person name="Hata H."/>
            <person name="Watanabe M."/>
            <person name="Komatsu T."/>
            <person name="Mizushima-Sugano J."/>
            <person name="Satoh T."/>
            <person name="Shirai Y."/>
            <person name="Takahashi Y."/>
            <person name="Nakagawa K."/>
            <person name="Okumura K."/>
            <person name="Nagase T."/>
            <person name="Nomura N."/>
            <person name="Kikuchi H."/>
            <person name="Masuho Y."/>
            <person name="Yamashita R."/>
            <person name="Nakai K."/>
            <person name="Yada T."/>
            <person name="Nakamura Y."/>
            <person name="Ohara O."/>
            <person name="Isogai T."/>
            <person name="Sugano S."/>
        </authorList>
    </citation>
    <scope>NUCLEOTIDE SEQUENCE [LARGE SCALE MRNA] (ISOFORM 2)</scope>
    <source>
        <tissue>Brain</tissue>
    </source>
</reference>
<reference key="5">
    <citation type="journal article" date="2005" name="Nature">
        <title>Generation and annotation of the DNA sequences of human chromosomes 2 and 4.</title>
        <authorList>
            <person name="Hillier L.W."/>
            <person name="Graves T.A."/>
            <person name="Fulton R.S."/>
            <person name="Fulton L.A."/>
            <person name="Pepin K.H."/>
            <person name="Minx P."/>
            <person name="Wagner-McPherson C."/>
            <person name="Layman D."/>
            <person name="Wylie K."/>
            <person name="Sekhon M."/>
            <person name="Becker M.C."/>
            <person name="Fewell G.A."/>
            <person name="Delehaunty K.D."/>
            <person name="Miner T.L."/>
            <person name="Nash W.E."/>
            <person name="Kremitzki C."/>
            <person name="Oddy L."/>
            <person name="Du H."/>
            <person name="Sun H."/>
            <person name="Bradshaw-Cordum H."/>
            <person name="Ali J."/>
            <person name="Carter J."/>
            <person name="Cordes M."/>
            <person name="Harris A."/>
            <person name="Isak A."/>
            <person name="van Brunt A."/>
            <person name="Nguyen C."/>
            <person name="Du F."/>
            <person name="Courtney L."/>
            <person name="Kalicki J."/>
            <person name="Ozersky P."/>
            <person name="Abbott S."/>
            <person name="Armstrong J."/>
            <person name="Belter E.A."/>
            <person name="Caruso L."/>
            <person name="Cedroni M."/>
            <person name="Cotton M."/>
            <person name="Davidson T."/>
            <person name="Desai A."/>
            <person name="Elliott G."/>
            <person name="Erb T."/>
            <person name="Fronick C."/>
            <person name="Gaige T."/>
            <person name="Haakenson W."/>
            <person name="Haglund K."/>
            <person name="Holmes A."/>
            <person name="Harkins R."/>
            <person name="Kim K."/>
            <person name="Kruchowski S.S."/>
            <person name="Strong C.M."/>
            <person name="Grewal N."/>
            <person name="Goyea E."/>
            <person name="Hou S."/>
            <person name="Levy A."/>
            <person name="Martinka S."/>
            <person name="Mead K."/>
            <person name="McLellan M.D."/>
            <person name="Meyer R."/>
            <person name="Randall-Maher J."/>
            <person name="Tomlinson C."/>
            <person name="Dauphin-Kohlberg S."/>
            <person name="Kozlowicz-Reilly A."/>
            <person name="Shah N."/>
            <person name="Swearengen-Shahid S."/>
            <person name="Snider J."/>
            <person name="Strong J.T."/>
            <person name="Thompson J."/>
            <person name="Yoakum M."/>
            <person name="Leonard S."/>
            <person name="Pearman C."/>
            <person name="Trani L."/>
            <person name="Radionenko M."/>
            <person name="Waligorski J.E."/>
            <person name="Wang C."/>
            <person name="Rock S.M."/>
            <person name="Tin-Wollam A.-M."/>
            <person name="Maupin R."/>
            <person name="Latreille P."/>
            <person name="Wendl M.C."/>
            <person name="Yang S.-P."/>
            <person name="Pohl C."/>
            <person name="Wallis J.W."/>
            <person name="Spieth J."/>
            <person name="Bieri T.A."/>
            <person name="Berkowicz N."/>
            <person name="Nelson J.O."/>
            <person name="Osborne J."/>
            <person name="Ding L."/>
            <person name="Meyer R."/>
            <person name="Sabo A."/>
            <person name="Shotland Y."/>
            <person name="Sinha P."/>
            <person name="Wohldmann P.E."/>
            <person name="Cook L.L."/>
            <person name="Hickenbotham M.T."/>
            <person name="Eldred J."/>
            <person name="Williams D."/>
            <person name="Jones T.A."/>
            <person name="She X."/>
            <person name="Ciccarelli F.D."/>
            <person name="Izaurralde E."/>
            <person name="Taylor J."/>
            <person name="Schmutz J."/>
            <person name="Myers R.M."/>
            <person name="Cox D.R."/>
            <person name="Huang X."/>
            <person name="McPherson J.D."/>
            <person name="Mardis E.R."/>
            <person name="Clifton S.W."/>
            <person name="Warren W.C."/>
            <person name="Chinwalla A.T."/>
            <person name="Eddy S.R."/>
            <person name="Marra M.A."/>
            <person name="Ovcharenko I."/>
            <person name="Furey T.S."/>
            <person name="Miller W."/>
            <person name="Eichler E.E."/>
            <person name="Bork P."/>
            <person name="Suyama M."/>
            <person name="Torrents D."/>
            <person name="Waterston R.H."/>
            <person name="Wilson R.K."/>
        </authorList>
    </citation>
    <scope>NUCLEOTIDE SEQUENCE [LARGE SCALE GENOMIC DNA]</scope>
</reference>
<reference key="6">
    <citation type="journal article" date="2004" name="Genome Res.">
        <title>The status, quality, and expansion of the NIH full-length cDNA project: the Mammalian Gene Collection (MGC).</title>
        <authorList>
            <consortium name="The MGC Project Team"/>
        </authorList>
    </citation>
    <scope>NUCLEOTIDE SEQUENCE [LARGE SCALE MRNA] (ISOFORM 1)</scope>
</reference>
<reference key="7">
    <citation type="journal article" date="1998" name="Nat. Biotechnol.">
        <title>Selection system for genes encoding nuclear-targeted proteins.</title>
        <authorList>
            <person name="Ueki N."/>
            <person name="Oda T."/>
            <person name="Kondo M."/>
            <person name="Yano K."/>
            <person name="Noguchi T."/>
            <person name="Muramatsu M.-A."/>
        </authorList>
    </citation>
    <scope>NUCLEOTIDE SEQUENCE [LARGE SCALE MRNA] OF 1161-1214 (ISOFORM 1)</scope>
    <scope>SUBCELLULAR LOCATION</scope>
    <source>
        <tissue>Fetal brain</tissue>
    </source>
</reference>
<reference key="8">
    <citation type="journal article" date="2005" name="J. Biol. Chem.">
        <title>Pc2-mediated sumoylation of Smad-interacting protein 1 attenuates transcriptional repression of E-cadherin.</title>
        <authorList>
            <person name="Long J."/>
            <person name="Zuo D."/>
            <person name="Park M."/>
        </authorList>
    </citation>
    <scope>FUNCTION</scope>
    <scope>SUMOYLATION AT LYS-391 AND LYS-866</scope>
    <scope>INTERACTION WITH CBX4 AND CTBP1</scope>
    <scope>SUBCELLULAR LOCATION</scope>
</reference>
<reference key="9">
    <citation type="journal article" date="2009" name="Science">
        <title>Lysine acetylation targets protein complexes and co-regulates major cellular functions.</title>
        <authorList>
            <person name="Choudhary C."/>
            <person name="Kumar C."/>
            <person name="Gnad F."/>
            <person name="Nielsen M.L."/>
            <person name="Rehman M."/>
            <person name="Walther T.C."/>
            <person name="Olsen J.V."/>
            <person name="Mann M."/>
        </authorList>
    </citation>
    <scope>ACETYLATION [LARGE SCALE ANALYSIS] AT LYS-377</scope>
    <scope>IDENTIFICATION BY MASS SPECTROMETRY [LARGE SCALE ANALYSIS]</scope>
</reference>
<reference key="10">
    <citation type="journal article" date="2013" name="J. Proteome Res.">
        <title>Toward a comprehensive characterization of a human cancer cell phosphoproteome.</title>
        <authorList>
            <person name="Zhou H."/>
            <person name="Di Palma S."/>
            <person name="Preisinger C."/>
            <person name="Peng M."/>
            <person name="Polat A.N."/>
            <person name="Heck A.J."/>
            <person name="Mohammed S."/>
        </authorList>
    </citation>
    <scope>PHOSPHORYLATION [LARGE SCALE ANALYSIS] AT SER-142; SER-360; SER-647; THR-782; SER-784 AND SER-1122</scope>
    <scope>IDENTIFICATION BY MASS SPECTROMETRY [LARGE SCALE ANALYSIS]</scope>
    <source>
        <tissue>Erythroleukemia</tissue>
    </source>
</reference>
<reference key="11">
    <citation type="journal article" date="2014" name="J. Proteomics">
        <title>An enzyme assisted RP-RPLC approach for in-depth analysis of human liver phosphoproteome.</title>
        <authorList>
            <person name="Bian Y."/>
            <person name="Song C."/>
            <person name="Cheng K."/>
            <person name="Dong M."/>
            <person name="Wang F."/>
            <person name="Huang J."/>
            <person name="Sun D."/>
            <person name="Wang L."/>
            <person name="Ye M."/>
            <person name="Zou H."/>
        </authorList>
    </citation>
    <scope>IDENTIFICATION BY MASS SPECTROMETRY [LARGE SCALE ANALYSIS]</scope>
    <source>
        <tissue>Liver</tissue>
    </source>
</reference>
<reference key="12">
    <citation type="journal article" date="2014" name="Nat. Struct. Mol. Biol.">
        <title>Uncovering global SUMOylation signaling networks in a site-specific manner.</title>
        <authorList>
            <person name="Hendriks I.A."/>
            <person name="D'Souza R.C."/>
            <person name="Yang B."/>
            <person name="Verlaan-de Vries M."/>
            <person name="Mann M."/>
            <person name="Vertegaal A.C."/>
        </authorList>
    </citation>
    <scope>SUMOYLATION [LARGE SCALE ANALYSIS] AT LYS-391 AND LYS-866</scope>
    <scope>IDENTIFICATION BY MASS SPECTROMETRY [LARGE SCALE ANALYSIS]</scope>
</reference>
<reference key="13">
    <citation type="journal article" date="2015" name="Cell Rep.">
        <title>SUMO-2 orchestrates chromatin modifiers in response to DNA damage.</title>
        <authorList>
            <person name="Hendriks I.A."/>
            <person name="Treffers L.W."/>
            <person name="Verlaan-de Vries M."/>
            <person name="Olsen J.V."/>
            <person name="Vertegaal A.C."/>
        </authorList>
    </citation>
    <scope>SUMOYLATION [LARGE SCALE ANALYSIS] AT LYS-391</scope>
    <scope>IDENTIFICATION BY MASS SPECTROMETRY [LARGE SCALE ANALYSIS]</scope>
</reference>
<reference key="14">
    <citation type="journal article" date="2017" name="Nat. Struct. Mol. Biol.">
        <title>Site-specific mapping of the human SUMO proteome reveals co-modification with phosphorylation.</title>
        <authorList>
            <person name="Hendriks I.A."/>
            <person name="Lyon D."/>
            <person name="Young C."/>
            <person name="Jensen L.J."/>
            <person name="Vertegaal A.C."/>
            <person name="Nielsen M.L."/>
        </authorList>
    </citation>
    <scope>SUMOYLATION [LARGE SCALE ANALYSIS] AT LYS-391; LYS-479; LYS-555; LYS-611; LYS-632; LYS-713 AND LYS-866</scope>
    <scope>IDENTIFICATION BY MASS SPECTROMETRY [LARGE SCALE ANALYSIS]</scope>
</reference>
<reference key="15">
    <citation type="submission" date="2006-12" db="PDB data bank">
        <title>Solution structure of the homeobox domain of zinc finger homeobox protein 1B (SMAD interacting protein 1).</title>
        <authorList>
            <consortium name="RIKEN structural genomics initiative (RSGI)"/>
        </authorList>
    </citation>
    <scope>STRUCTURE BY NMR OF 647-705</scope>
</reference>
<reference key="16">
    <citation type="journal article" date="2002" name="Neurology">
        <title>Late infantile Hirschsprung disease-mental retardation syndrome with a 3-bp deletion in ZFHX1B.</title>
        <authorList>
            <person name="Yoneda M."/>
            <person name="Fujita T."/>
            <person name="Yamada Y."/>
            <person name="Yamada K."/>
            <person name="Fujii A."/>
            <person name="Inagaki T."/>
            <person name="Nakagawa H."/>
            <person name="Shimada A."/>
            <person name="Kishikawa M."/>
            <person name="Nagaya M."/>
            <person name="Azuma T."/>
            <person name="Kuriyama M."/>
            <person name="Wakamatsu N."/>
        </authorList>
    </citation>
    <scope>VARIANT MOWS ASN-99 DEL</scope>
</reference>
<reference key="17">
    <citation type="journal article" date="2004" name="Am. J. Med. Genet. A">
        <title>Ocular coloboma and high myopia with Hirschsprung disease associated with a novel ZFHX1B missense mutation and trisomy 21.</title>
        <authorList>
            <person name="Gregory-Evans C.Y."/>
            <person name="Vieira H."/>
            <person name="Dalton R."/>
            <person name="Adams G.G.W."/>
            <person name="Salt A."/>
            <person name="Gregory-Evans K."/>
        </authorList>
    </citation>
    <scope>VARIANT MOWS GLY-953</scope>
</reference>
<reference key="18">
    <citation type="journal article" date="2006" name="Am. J. Med. Genet. A">
        <title>A missense mutation in the ZFHX1B gene associated with an atypical Mowat-Wilson syndrome phenotype.</title>
        <authorList>
            <person name="Heinritz W."/>
            <person name="Zweier C."/>
            <person name="Froster U.G."/>
            <person name="Strenge S."/>
            <person name="Kujat A."/>
            <person name="Syrbe S."/>
            <person name="Rauch A."/>
            <person name="Schuster V."/>
        </authorList>
    </citation>
    <scope>VARIANT MOWS ARG-1119</scope>
</reference>
<reference key="19">
    <citation type="journal article" date="2006" name="Science">
        <title>The consensus coding sequences of human breast and colorectal cancers.</title>
        <authorList>
            <person name="Sjoeblom T."/>
            <person name="Jones S."/>
            <person name="Wood L.D."/>
            <person name="Parsons D.W."/>
            <person name="Lin J."/>
            <person name="Barber T.D."/>
            <person name="Mandelker D."/>
            <person name="Leary R.J."/>
            <person name="Ptak J."/>
            <person name="Silliman N."/>
            <person name="Szabo S."/>
            <person name="Buckhaults P."/>
            <person name="Farrell C."/>
            <person name="Meeh P."/>
            <person name="Markowitz S.D."/>
            <person name="Willis J."/>
            <person name="Dawson D."/>
            <person name="Willson J.K.V."/>
            <person name="Gazdar A.F."/>
            <person name="Hartigan J."/>
            <person name="Wu L."/>
            <person name="Liu C."/>
            <person name="Parmigiani G."/>
            <person name="Park B.H."/>
            <person name="Bachman K.E."/>
            <person name="Papadopoulos N."/>
            <person name="Vogelstein B."/>
            <person name="Kinzler K.W."/>
            <person name="Velculescu V.E."/>
        </authorList>
    </citation>
    <scope>VARIANT [LARGE SCALE ANALYSIS] ASN-983</scope>
</reference>
<reference key="20">
    <citation type="journal article" date="2010" name="Mol. Cell. Biol.">
        <title>Regulation of the expression and activity of the antiangiogenic homeobox gene GAX/MEOX2 by ZEB2 and microRNA-221.</title>
        <authorList>
            <person name="Chen Y."/>
            <person name="Banda M."/>
            <person name="Speyer C.L."/>
            <person name="Smith J.S."/>
            <person name="Rabson A.B."/>
            <person name="Gorski D.H."/>
        </authorList>
    </citation>
    <scope>FUNCTION</scope>
    <scope>SUBCELLULAR LOCATION</scope>
    <scope>INDUCTION</scope>
</reference>
<keyword id="KW-0002">3D-structure</keyword>
<keyword id="KW-0007">Acetylation</keyword>
<keyword id="KW-0025">Alternative splicing</keyword>
<keyword id="KW-0158">Chromosome</keyword>
<keyword id="KW-0225">Disease variant</keyword>
<keyword id="KW-0238">DNA-binding</keyword>
<keyword id="KW-0887">Epilepsy</keyword>
<keyword id="KW-0367">Hirschsprung disease</keyword>
<keyword id="KW-0371">Homeobox</keyword>
<keyword id="KW-0991">Intellectual disability</keyword>
<keyword id="KW-1017">Isopeptide bond</keyword>
<keyword id="KW-0479">Metal-binding</keyword>
<keyword id="KW-0539">Nucleus</keyword>
<keyword id="KW-0597">Phosphoprotein</keyword>
<keyword id="KW-1267">Proteomics identification</keyword>
<keyword id="KW-1185">Reference proteome</keyword>
<keyword id="KW-0677">Repeat</keyword>
<keyword id="KW-0678">Repressor</keyword>
<keyword id="KW-0804">Transcription</keyword>
<keyword id="KW-0805">Transcription regulation</keyword>
<keyword id="KW-0832">Ubl conjugation</keyword>
<keyword id="KW-0862">Zinc</keyword>
<keyword id="KW-0863">Zinc-finger</keyword>
<proteinExistence type="evidence at protein level"/>
<feature type="chain" id="PRO_0000047236" description="Zinc finger E-box-binding homeobox 2">
    <location>
        <begin position="1"/>
        <end position="1214"/>
    </location>
</feature>
<feature type="zinc finger region" description="C2H2-type 1" evidence="3">
    <location>
        <begin position="211"/>
        <end position="234"/>
    </location>
</feature>
<feature type="zinc finger region" description="C2H2-type 2" evidence="3">
    <location>
        <begin position="241"/>
        <end position="263"/>
    </location>
</feature>
<feature type="zinc finger region" description="C2H2-type 3" evidence="3">
    <location>
        <begin position="282"/>
        <end position="304"/>
    </location>
</feature>
<feature type="zinc finger region" description="C2H2-type 4; atypical" evidence="3">
    <location>
        <begin position="310"/>
        <end position="334"/>
    </location>
</feature>
<feature type="zinc finger region" description="C2H2-type 5; atypical" evidence="3">
    <location>
        <begin position="581"/>
        <end position="605"/>
    </location>
</feature>
<feature type="DNA-binding region" description="Homeobox; atypical">
    <location>
        <begin position="644"/>
        <end position="703"/>
    </location>
</feature>
<feature type="zinc finger region" description="C2H2-type 6" evidence="3">
    <location>
        <begin position="999"/>
        <end position="1021"/>
    </location>
</feature>
<feature type="zinc finger region" description="C2H2-type 7" evidence="3">
    <location>
        <begin position="1027"/>
        <end position="1049"/>
    </location>
</feature>
<feature type="zinc finger region" description="C2H2-type 8; atypical" evidence="3">
    <location>
        <begin position="1055"/>
        <end position="1076"/>
    </location>
</feature>
<feature type="region of interest" description="Disordered" evidence="4">
    <location>
        <begin position="1"/>
        <end position="101"/>
    </location>
</feature>
<feature type="region of interest" description="SMAD-MH2 binding domain" evidence="1">
    <location>
        <begin position="437"/>
        <end position="487"/>
    </location>
</feature>
<feature type="region of interest" description="Disordered" evidence="4">
    <location>
        <begin position="702"/>
        <end position="740"/>
    </location>
</feature>
<feature type="region of interest" description="Disordered" evidence="4">
    <location>
        <begin position="771"/>
        <end position="810"/>
    </location>
</feature>
<feature type="region of interest" description="Disordered" evidence="4">
    <location>
        <begin position="832"/>
        <end position="857"/>
    </location>
</feature>
<feature type="region of interest" description="Disordered" evidence="4">
    <location>
        <begin position="1117"/>
        <end position="1214"/>
    </location>
</feature>
<feature type="compositionally biased region" description="Basic residues" evidence="4">
    <location>
        <begin position="12"/>
        <end position="24"/>
    </location>
</feature>
<feature type="compositionally biased region" description="Polar residues" evidence="4">
    <location>
        <begin position="57"/>
        <end position="74"/>
    </location>
</feature>
<feature type="compositionally biased region" description="Basic and acidic residues" evidence="4">
    <location>
        <begin position="89"/>
        <end position="98"/>
    </location>
</feature>
<feature type="compositionally biased region" description="Low complexity" evidence="4">
    <location>
        <begin position="702"/>
        <end position="715"/>
    </location>
</feature>
<feature type="compositionally biased region" description="Low complexity" evidence="4">
    <location>
        <begin position="780"/>
        <end position="808"/>
    </location>
</feature>
<feature type="compositionally biased region" description="Low complexity" evidence="4">
    <location>
        <begin position="840"/>
        <end position="854"/>
    </location>
</feature>
<feature type="compositionally biased region" description="Basic and acidic residues" evidence="4">
    <location>
        <begin position="1127"/>
        <end position="1155"/>
    </location>
</feature>
<feature type="compositionally biased region" description="Acidic residues" evidence="4">
    <location>
        <begin position="1156"/>
        <end position="1167"/>
    </location>
</feature>
<feature type="compositionally biased region" description="Basic and acidic residues" evidence="4">
    <location>
        <begin position="1168"/>
        <end position="1179"/>
    </location>
</feature>
<feature type="compositionally biased region" description="Basic and acidic residues" evidence="4">
    <location>
        <begin position="1186"/>
        <end position="1205"/>
    </location>
</feature>
<feature type="modified residue" description="Phosphoserine" evidence="19">
    <location>
        <position position="142"/>
    </location>
</feature>
<feature type="modified residue" description="Phosphoserine" evidence="2">
    <location>
        <position position="356"/>
    </location>
</feature>
<feature type="modified residue" description="Phosphoserine" evidence="19">
    <location>
        <position position="360"/>
    </location>
</feature>
<feature type="modified residue" description="Phosphoserine" evidence="2">
    <location>
        <position position="364"/>
    </location>
</feature>
<feature type="modified residue" description="N6-acetyllysine" evidence="18">
    <location>
        <position position="377"/>
    </location>
</feature>
<feature type="modified residue" description="Phosphoserine" evidence="19">
    <location>
        <position position="647"/>
    </location>
</feature>
<feature type="modified residue" description="Phosphoserine" evidence="2">
    <location>
        <position position="731"/>
    </location>
</feature>
<feature type="modified residue" description="Phosphoserine" evidence="2">
    <location>
        <position position="780"/>
    </location>
</feature>
<feature type="modified residue" description="Phosphothreonine" evidence="19">
    <location>
        <position position="782"/>
    </location>
</feature>
<feature type="modified residue" description="Phosphoserine" evidence="19">
    <location>
        <position position="784"/>
    </location>
</feature>
<feature type="modified residue" description="Phosphoserine" evidence="19">
    <location>
        <position position="1122"/>
    </location>
</feature>
<feature type="modified residue" description="Phosphoserine" evidence="2">
    <location>
        <position position="1124"/>
    </location>
</feature>
<feature type="modified residue" description="Phosphoserine" evidence="2">
    <location>
        <position position="1203"/>
    </location>
</feature>
<feature type="cross-link" description="Glycyl lysine isopeptide (Lys-Gly) (interchain with G-Cter in SUMO); alternate">
    <location>
        <position position="391"/>
    </location>
</feature>
<feature type="cross-link" description="Glycyl lysine isopeptide (Lys-Gly) (interchain with G-Cter in SUMO2); alternate" evidence="20 21 22">
    <location>
        <position position="391"/>
    </location>
</feature>
<feature type="cross-link" description="Glycyl lysine isopeptide (Lys-Gly) (interchain with G-Cter in SUMO2)" evidence="22">
    <location>
        <position position="479"/>
    </location>
</feature>
<feature type="cross-link" description="Glycyl lysine isopeptide (Lys-Gly) (interchain with G-Cter in SUMO2)" evidence="22">
    <location>
        <position position="555"/>
    </location>
</feature>
<feature type="cross-link" description="Glycyl lysine isopeptide (Lys-Gly) (interchain with G-Cter in SUMO2)" evidence="22">
    <location>
        <position position="611"/>
    </location>
</feature>
<feature type="cross-link" description="Glycyl lysine isopeptide (Lys-Gly) (interchain with G-Cter in SUMO2)" evidence="22">
    <location>
        <position position="632"/>
    </location>
</feature>
<feature type="cross-link" description="Glycyl lysine isopeptide (Lys-Gly) (interchain with G-Cter in SUMO2)" evidence="22">
    <location>
        <position position="713"/>
    </location>
</feature>
<feature type="cross-link" description="Glycyl lysine isopeptide (Lys-Gly) (interchain with G-Cter in SUMO); alternate">
    <location>
        <position position="866"/>
    </location>
</feature>
<feature type="cross-link" description="Glycyl lysine isopeptide (Lys-Gly) (interchain with G-Cter in SUMO2); alternate" evidence="20 22">
    <location>
        <position position="866"/>
    </location>
</feature>
<feature type="splice variant" id="VSP_044797" description="In isoform 2." evidence="14">
    <location>
        <begin position="111"/>
        <end position="134"/>
    </location>
</feature>
<feature type="sequence variant" id="VAR_027016" description="In MOWS." evidence="6">
    <location>
        <position position="99"/>
    </location>
</feature>
<feature type="sequence variant" id="VAR_027017" description="In MOWS." evidence="7">
    <original>R</original>
    <variation>G</variation>
    <location>
        <position position="953"/>
    </location>
</feature>
<feature type="sequence variant" id="VAR_035563" description="In a colorectal cancer sample; somatic mutation." evidence="10">
    <original>D</original>
    <variation>N</variation>
    <location>
        <position position="983"/>
    </location>
</feature>
<feature type="sequence variant" id="VAR_027018" description="In MOWS; dbSNP:rs137852983." evidence="9">
    <original>Q</original>
    <variation>R</variation>
    <location>
        <position position="1119"/>
    </location>
</feature>
<feature type="sequence conflict" description="In Ref. 4; BAH11928." evidence="16" ref="4">
    <original>D</original>
    <variation>G</variation>
    <location>
        <position position="1155"/>
    </location>
</feature>
<feature type="helix" evidence="23">
    <location>
        <begin position="654"/>
        <end position="665"/>
    </location>
</feature>
<feature type="helix" evidence="23">
    <location>
        <begin position="671"/>
        <end position="681"/>
    </location>
</feature>
<feature type="helix" evidence="23">
    <location>
        <begin position="685"/>
        <end position="700"/>
    </location>
</feature>
<dbReference type="EMBL" id="AY029472">
    <property type="protein sequence ID" value="AAK52081.1"/>
    <property type="molecule type" value="Genomic_DNA"/>
</dbReference>
<dbReference type="EMBL" id="AB056507">
    <property type="protein sequence ID" value="BAB40819.1"/>
    <property type="molecule type" value="mRNA"/>
</dbReference>
<dbReference type="EMBL" id="AB011141">
    <property type="protein sequence ID" value="BAA25495.2"/>
    <property type="status" value="ALT_INIT"/>
    <property type="molecule type" value="mRNA"/>
</dbReference>
<dbReference type="EMBL" id="AK294928">
    <property type="protein sequence ID" value="BAH11928.1"/>
    <property type="molecule type" value="mRNA"/>
</dbReference>
<dbReference type="EMBL" id="AC009951">
    <property type="status" value="NOT_ANNOTATED_CDS"/>
    <property type="molecule type" value="Genomic_DNA"/>
</dbReference>
<dbReference type="EMBL" id="AC010130">
    <property type="status" value="NOT_ANNOTATED_CDS"/>
    <property type="molecule type" value="Genomic_DNA"/>
</dbReference>
<dbReference type="EMBL" id="BC127102">
    <property type="protein sequence ID" value="AAI27103.1"/>
    <property type="molecule type" value="mRNA"/>
</dbReference>
<dbReference type="EMBL" id="AB015341">
    <property type="protein sequence ID" value="BAA34798.1"/>
    <property type="molecule type" value="mRNA"/>
</dbReference>
<dbReference type="CCDS" id="CCDS2186.1">
    <molecule id="O60315-1"/>
</dbReference>
<dbReference type="CCDS" id="CCDS54403.1">
    <molecule id="O60315-2"/>
</dbReference>
<dbReference type="RefSeq" id="NP_001165124.1">
    <molecule id="O60315-2"/>
    <property type="nucleotide sequence ID" value="NM_001171653.2"/>
</dbReference>
<dbReference type="RefSeq" id="NP_055610.1">
    <molecule id="O60315-1"/>
    <property type="nucleotide sequence ID" value="NM_014795.4"/>
</dbReference>
<dbReference type="RefSeq" id="XP_006712944.1">
    <property type="nucleotide sequence ID" value="XM_006712881.3"/>
</dbReference>
<dbReference type="RefSeq" id="XP_006712945.1">
    <property type="nucleotide sequence ID" value="XM_006712882.3"/>
</dbReference>
<dbReference type="PDB" id="2DA7">
    <property type="method" value="NMR"/>
    <property type="chains" value="A=647-704"/>
</dbReference>
<dbReference type="PDBsum" id="2DA7"/>
<dbReference type="BMRB" id="O60315"/>
<dbReference type="SMR" id="O60315"/>
<dbReference type="BioGRID" id="115175">
    <property type="interactions" value="87"/>
</dbReference>
<dbReference type="CORUM" id="O60315"/>
<dbReference type="ELM" id="O60315"/>
<dbReference type="FunCoup" id="O60315">
    <property type="interactions" value="2808"/>
</dbReference>
<dbReference type="IntAct" id="O60315">
    <property type="interactions" value="67"/>
</dbReference>
<dbReference type="MINT" id="O60315"/>
<dbReference type="STRING" id="9606.ENSP00000487174"/>
<dbReference type="iPTMnet" id="O60315"/>
<dbReference type="PhosphoSitePlus" id="O60315"/>
<dbReference type="BioMuta" id="ZEB2"/>
<dbReference type="jPOST" id="O60315"/>
<dbReference type="MassIVE" id="O60315"/>
<dbReference type="PaxDb" id="9606-ENSP00000454157"/>
<dbReference type="PeptideAtlas" id="O60315"/>
<dbReference type="ProteomicsDB" id="27650"/>
<dbReference type="ProteomicsDB" id="49342">
    <molecule id="O60315-1"/>
</dbReference>
<dbReference type="Pumba" id="O60315"/>
<dbReference type="Antibodypedia" id="18810">
    <property type="antibodies" value="665 antibodies from 41 providers"/>
</dbReference>
<dbReference type="CPTC" id="O60315">
    <property type="antibodies" value="1 antibody"/>
</dbReference>
<dbReference type="DNASU" id="9839"/>
<dbReference type="Ensembl" id="ENST00000409487.7">
    <molecule id="O60315-1"/>
    <property type="protein sequence ID" value="ENSP00000386854.2"/>
    <property type="gene ID" value="ENSG00000169554.23"/>
</dbReference>
<dbReference type="Ensembl" id="ENST00000539609.7">
    <molecule id="O60315-2"/>
    <property type="protein sequence ID" value="ENSP00000443792.2"/>
    <property type="gene ID" value="ENSG00000169554.23"/>
</dbReference>
<dbReference type="Ensembl" id="ENST00000558170.6">
    <molecule id="O60315-1"/>
    <property type="protein sequence ID" value="ENSP00000454157.1"/>
    <property type="gene ID" value="ENSG00000169554.23"/>
</dbReference>
<dbReference type="Ensembl" id="ENST00000627532.3">
    <molecule id="O60315-1"/>
    <property type="protein sequence ID" value="ENSP00000487174.1"/>
    <property type="gene ID" value="ENSG00000169554.23"/>
</dbReference>
<dbReference type="GeneID" id="9839"/>
<dbReference type="KEGG" id="hsa:9839"/>
<dbReference type="MANE-Select" id="ENST00000627532.3">
    <property type="protein sequence ID" value="ENSP00000487174.1"/>
    <property type="RefSeq nucleotide sequence ID" value="NM_014795.4"/>
    <property type="RefSeq protein sequence ID" value="NP_055610.1"/>
</dbReference>
<dbReference type="UCSC" id="uc002tvu.4">
    <molecule id="O60315-1"/>
    <property type="organism name" value="human"/>
</dbReference>
<dbReference type="AGR" id="HGNC:14881"/>
<dbReference type="CTD" id="9839"/>
<dbReference type="DisGeNET" id="9839"/>
<dbReference type="GeneCards" id="ZEB2"/>
<dbReference type="GeneReviews" id="ZEB2"/>
<dbReference type="HGNC" id="HGNC:14881">
    <property type="gene designation" value="ZEB2"/>
</dbReference>
<dbReference type="HPA" id="ENSG00000169554">
    <property type="expression patterns" value="Tissue enhanced (brain)"/>
</dbReference>
<dbReference type="MalaCards" id="ZEB2"/>
<dbReference type="MIM" id="235730">
    <property type="type" value="phenotype"/>
</dbReference>
<dbReference type="MIM" id="605802">
    <property type="type" value="gene"/>
</dbReference>
<dbReference type="neXtProt" id="NX_O60315"/>
<dbReference type="OpenTargets" id="ENSG00000169554"/>
<dbReference type="Orphanet" id="626">
    <property type="disease" value="Large/giant congenital melanocytic nevus"/>
</dbReference>
<dbReference type="Orphanet" id="261552">
    <property type="disease" value="Mowat-Wilson syndrome due to a ZEB2 point mutation"/>
</dbReference>
<dbReference type="Orphanet" id="261537">
    <property type="disease" value="Mowat-Wilson syndrome due to monosomy 2q22"/>
</dbReference>
<dbReference type="PharmGKB" id="PA162409612"/>
<dbReference type="VEuPathDB" id="HostDB:ENSG00000169554"/>
<dbReference type="eggNOG" id="KOG3623">
    <property type="taxonomic scope" value="Eukaryota"/>
</dbReference>
<dbReference type="GeneTree" id="ENSGT00950000183208"/>
<dbReference type="HOGENOM" id="CLU_005890_0_1_1"/>
<dbReference type="InParanoid" id="O60315"/>
<dbReference type="OMA" id="QENMFTP"/>
<dbReference type="OrthoDB" id="7491548at2759"/>
<dbReference type="PAN-GO" id="O60315">
    <property type="GO annotations" value="4 GO annotations based on evolutionary models"/>
</dbReference>
<dbReference type="PhylomeDB" id="O60315"/>
<dbReference type="TreeFam" id="TF331759"/>
<dbReference type="PathwayCommons" id="O60315"/>
<dbReference type="Reactome" id="R-HSA-9762293">
    <property type="pathway name" value="Regulation of CDH11 gene transcription"/>
</dbReference>
<dbReference type="Reactome" id="R-HSA-9823739">
    <property type="pathway name" value="Formation of the anterior neural plate"/>
</dbReference>
<dbReference type="Reactome" id="R-HSA-9832991">
    <property type="pathway name" value="Formation of the posterior neural plate"/>
</dbReference>
<dbReference type="SignaLink" id="O60315"/>
<dbReference type="SIGNOR" id="O60315"/>
<dbReference type="BioGRID-ORCS" id="9839">
    <property type="hits" value="123 hits in 1200 CRISPR screens"/>
</dbReference>
<dbReference type="ChiTaRS" id="ZEB2">
    <property type="organism name" value="human"/>
</dbReference>
<dbReference type="EvolutionaryTrace" id="O60315"/>
<dbReference type="GeneWiki" id="ZEB2"/>
<dbReference type="GenomeRNAi" id="9839"/>
<dbReference type="Pharos" id="O60315">
    <property type="development level" value="Tbio"/>
</dbReference>
<dbReference type="PRO" id="PR:O60315"/>
<dbReference type="Proteomes" id="UP000005640">
    <property type="component" value="Chromosome 2"/>
</dbReference>
<dbReference type="RNAct" id="O60315">
    <property type="molecule type" value="protein"/>
</dbReference>
<dbReference type="Bgee" id="ENSG00000169554">
    <property type="expression patterns" value="Expressed in cortical plate and 204 other cell types or tissues"/>
</dbReference>
<dbReference type="ExpressionAtlas" id="O60315">
    <property type="expression patterns" value="baseline and differential"/>
</dbReference>
<dbReference type="GO" id="GO:0000785">
    <property type="term" value="C:chromatin"/>
    <property type="evidence" value="ECO:0000314"/>
    <property type="project" value="BHF-UCL"/>
</dbReference>
<dbReference type="GO" id="GO:0005730">
    <property type="term" value="C:nucleolus"/>
    <property type="evidence" value="ECO:0000314"/>
    <property type="project" value="HPA"/>
</dbReference>
<dbReference type="GO" id="GO:0005654">
    <property type="term" value="C:nucleoplasm"/>
    <property type="evidence" value="ECO:0000314"/>
    <property type="project" value="HPA"/>
</dbReference>
<dbReference type="GO" id="GO:0005634">
    <property type="term" value="C:nucleus"/>
    <property type="evidence" value="ECO:0000314"/>
    <property type="project" value="BHF-UCL"/>
</dbReference>
<dbReference type="GO" id="GO:0005886">
    <property type="term" value="C:plasma membrane"/>
    <property type="evidence" value="ECO:0000314"/>
    <property type="project" value="HPA"/>
</dbReference>
<dbReference type="GO" id="GO:0001228">
    <property type="term" value="F:DNA-binding transcription activator activity, RNA polymerase II-specific"/>
    <property type="evidence" value="ECO:0007669"/>
    <property type="project" value="Ensembl"/>
</dbReference>
<dbReference type="GO" id="GO:0000981">
    <property type="term" value="F:DNA-binding transcription factor activity, RNA polymerase II-specific"/>
    <property type="evidence" value="ECO:0000247"/>
    <property type="project" value="NTNU_SB"/>
</dbReference>
<dbReference type="GO" id="GO:0001227">
    <property type="term" value="F:DNA-binding transcription repressor activity, RNA polymerase II-specific"/>
    <property type="evidence" value="ECO:0000314"/>
    <property type="project" value="BHF-UCL"/>
</dbReference>
<dbReference type="GO" id="GO:0019208">
    <property type="term" value="F:phosphatase regulator activity"/>
    <property type="evidence" value="ECO:0000303"/>
    <property type="project" value="UniProtKB"/>
</dbReference>
<dbReference type="GO" id="GO:0070412">
    <property type="term" value="F:R-SMAD binding"/>
    <property type="evidence" value="ECO:0007669"/>
    <property type="project" value="Ensembl"/>
</dbReference>
<dbReference type="GO" id="GO:0000978">
    <property type="term" value="F:RNA polymerase II cis-regulatory region sequence-specific DNA binding"/>
    <property type="evidence" value="ECO:0000314"/>
    <property type="project" value="BHF-UCL"/>
</dbReference>
<dbReference type="GO" id="GO:0008270">
    <property type="term" value="F:zinc ion binding"/>
    <property type="evidence" value="ECO:0007669"/>
    <property type="project" value="UniProtKB-KW"/>
</dbReference>
<dbReference type="GO" id="GO:0048143">
    <property type="term" value="P:astrocyte activation"/>
    <property type="evidence" value="ECO:0007669"/>
    <property type="project" value="Ensembl"/>
</dbReference>
<dbReference type="GO" id="GO:0021846">
    <property type="term" value="P:cell proliferation in forebrain"/>
    <property type="evidence" value="ECO:0007669"/>
    <property type="project" value="Ensembl"/>
</dbReference>
<dbReference type="GO" id="GO:0007417">
    <property type="term" value="P:central nervous system development"/>
    <property type="evidence" value="ECO:0000318"/>
    <property type="project" value="GO_Central"/>
</dbReference>
<dbReference type="GO" id="GO:0048668">
    <property type="term" value="P:collateral sprouting"/>
    <property type="evidence" value="ECO:0007669"/>
    <property type="project" value="Ensembl"/>
</dbReference>
<dbReference type="GO" id="GO:0021540">
    <property type="term" value="P:corpus callosum morphogenesis"/>
    <property type="evidence" value="ECO:0007669"/>
    <property type="project" value="Ensembl"/>
</dbReference>
<dbReference type="GO" id="GO:0021957">
    <property type="term" value="P:corticospinal tract morphogenesis"/>
    <property type="evidence" value="ECO:0007669"/>
    <property type="project" value="Ensembl"/>
</dbReference>
<dbReference type="GO" id="GO:0048066">
    <property type="term" value="P:developmental pigmentation"/>
    <property type="evidence" value="ECO:0000250"/>
    <property type="project" value="BHF-UCL"/>
</dbReference>
<dbReference type="GO" id="GO:0043542">
    <property type="term" value="P:endothelial cell migration"/>
    <property type="evidence" value="ECO:0007669"/>
    <property type="project" value="Ensembl"/>
</dbReference>
<dbReference type="GO" id="GO:0001935">
    <property type="term" value="P:endothelial cell proliferation"/>
    <property type="evidence" value="ECO:0007669"/>
    <property type="project" value="Ensembl"/>
</dbReference>
<dbReference type="GO" id="GO:0072537">
    <property type="term" value="P:fibroblast activation"/>
    <property type="evidence" value="ECO:0007669"/>
    <property type="project" value="Ensembl"/>
</dbReference>
<dbReference type="GO" id="GO:0021766">
    <property type="term" value="P:hippocampus development"/>
    <property type="evidence" value="ECO:0007669"/>
    <property type="project" value="Ensembl"/>
</dbReference>
<dbReference type="GO" id="GO:0061373">
    <property type="term" value="P:mammillary axonal complex development"/>
    <property type="evidence" value="ECO:0007669"/>
    <property type="project" value="Ensembl"/>
</dbReference>
<dbReference type="GO" id="GO:0097324">
    <property type="term" value="P:melanocyte migration"/>
    <property type="evidence" value="ECO:0000250"/>
    <property type="project" value="BHF-UCL"/>
</dbReference>
<dbReference type="GO" id="GO:0036446">
    <property type="term" value="P:myofibroblast differentiation"/>
    <property type="evidence" value="ECO:0007669"/>
    <property type="project" value="Ensembl"/>
</dbReference>
<dbReference type="GO" id="GO:0010764">
    <property type="term" value="P:negative regulation of fibroblast migration"/>
    <property type="evidence" value="ECO:0007669"/>
    <property type="project" value="Ensembl"/>
</dbReference>
<dbReference type="GO" id="GO:0000122">
    <property type="term" value="P:negative regulation of transcription by RNA polymerase II"/>
    <property type="evidence" value="ECO:0000314"/>
    <property type="project" value="BHF-UCL"/>
</dbReference>
<dbReference type="GO" id="GO:0007399">
    <property type="term" value="P:nervous system development"/>
    <property type="evidence" value="ECO:0000303"/>
    <property type="project" value="UniProtKB"/>
</dbReference>
<dbReference type="GO" id="GO:0001755">
    <property type="term" value="P:neural crest cell migration"/>
    <property type="evidence" value="ECO:0007669"/>
    <property type="project" value="Ensembl"/>
</dbReference>
<dbReference type="GO" id="GO:0001843">
    <property type="term" value="P:neural tube closure"/>
    <property type="evidence" value="ECO:0007669"/>
    <property type="project" value="Ensembl"/>
</dbReference>
<dbReference type="GO" id="GO:0050772">
    <property type="term" value="P:positive regulation of axonogenesis"/>
    <property type="evidence" value="ECO:0007669"/>
    <property type="project" value="Ensembl"/>
</dbReference>
<dbReference type="GO" id="GO:0090263">
    <property type="term" value="P:positive regulation of canonical Wnt signaling pathway"/>
    <property type="evidence" value="ECO:0000315"/>
    <property type="project" value="DIBU"/>
</dbReference>
<dbReference type="GO" id="GO:1902748">
    <property type="term" value="P:positive regulation of lens fiber cell differentiation"/>
    <property type="evidence" value="ECO:0007669"/>
    <property type="project" value="Ensembl"/>
</dbReference>
<dbReference type="GO" id="GO:0048023">
    <property type="term" value="P:positive regulation of melanin biosynthetic process"/>
    <property type="evidence" value="ECO:0000305"/>
    <property type="project" value="BHF-UCL"/>
</dbReference>
<dbReference type="GO" id="GO:0045636">
    <property type="term" value="P:positive regulation of melanocyte differentiation"/>
    <property type="evidence" value="ECO:0000250"/>
    <property type="project" value="BHF-UCL"/>
</dbReference>
<dbReference type="GO" id="GO:1904330">
    <property type="term" value="P:positive regulation of myofibroblast contraction"/>
    <property type="evidence" value="ECO:0007669"/>
    <property type="project" value="Ensembl"/>
</dbReference>
<dbReference type="GO" id="GO:0045944">
    <property type="term" value="P:positive regulation of transcription by RNA polymerase II"/>
    <property type="evidence" value="ECO:0000315"/>
    <property type="project" value="BHF-UCL"/>
</dbReference>
<dbReference type="GO" id="GO:0030511">
    <property type="term" value="P:positive regulation of transforming growth factor beta receptor signaling pathway"/>
    <property type="evidence" value="ECO:0000315"/>
    <property type="project" value="DIBU"/>
</dbReference>
<dbReference type="GO" id="GO:0070269">
    <property type="term" value="P:pyroptotic inflammatory response"/>
    <property type="evidence" value="ECO:0007669"/>
    <property type="project" value="Ensembl"/>
</dbReference>
<dbReference type="GO" id="GO:1905603">
    <property type="term" value="P:regulation of blood-brain barrier permeability"/>
    <property type="evidence" value="ECO:0007669"/>
    <property type="project" value="Ensembl"/>
</dbReference>
<dbReference type="GO" id="GO:1903056">
    <property type="term" value="P:regulation of melanosome organization"/>
    <property type="evidence" value="ECO:0000250"/>
    <property type="project" value="BHF-UCL"/>
</dbReference>
<dbReference type="GO" id="GO:1904520">
    <property type="term" value="P:regulation of myofibroblast cell apoptotic process"/>
    <property type="evidence" value="ECO:0007669"/>
    <property type="project" value="Ensembl"/>
</dbReference>
<dbReference type="GO" id="GO:0006357">
    <property type="term" value="P:regulation of transcription by RNA polymerase II"/>
    <property type="evidence" value="ECO:0000318"/>
    <property type="project" value="GO_Central"/>
</dbReference>
<dbReference type="GO" id="GO:0090649">
    <property type="term" value="P:response to oxygen-glucose deprivation"/>
    <property type="evidence" value="ECO:0007669"/>
    <property type="project" value="Ensembl"/>
</dbReference>
<dbReference type="GO" id="GO:0001756">
    <property type="term" value="P:somitogenesis"/>
    <property type="evidence" value="ECO:0007669"/>
    <property type="project" value="Ensembl"/>
</dbReference>
<dbReference type="GO" id="GO:0043149">
    <property type="term" value="P:stress fiber assembly"/>
    <property type="evidence" value="ECO:0007669"/>
    <property type="project" value="Ensembl"/>
</dbReference>
<dbReference type="FunFam" id="3.30.160.60:FF:000013">
    <property type="entry name" value="Putative zinc finger E-box-binding homeobox 2"/>
    <property type="match status" value="2"/>
</dbReference>
<dbReference type="FunFam" id="3.30.160.60:FF:000082">
    <property type="entry name" value="Putative zinc finger E-box-binding homeobox 2"/>
    <property type="match status" value="1"/>
</dbReference>
<dbReference type="FunFam" id="1.10.10.60:FF:000105">
    <property type="entry name" value="Zinc finger E-box binding homeobox 2"/>
    <property type="match status" value="1"/>
</dbReference>
<dbReference type="FunFam" id="3.30.160.60:FF:000744">
    <property type="entry name" value="zinc finger E-box-binding homeobox 1"/>
    <property type="match status" value="1"/>
</dbReference>
<dbReference type="FunFam" id="3.30.160.60:FF:000117">
    <property type="entry name" value="Zinc finger E-box-binding homeobox 2 isoform 1"/>
    <property type="match status" value="1"/>
</dbReference>
<dbReference type="FunFam" id="3.30.160.60:FF:000145">
    <property type="entry name" value="Zinc finger protein 574"/>
    <property type="match status" value="1"/>
</dbReference>
<dbReference type="Gene3D" id="3.30.160.60">
    <property type="entry name" value="Classic Zinc Finger"/>
    <property type="match status" value="6"/>
</dbReference>
<dbReference type="Gene3D" id="1.10.10.60">
    <property type="entry name" value="Homeodomain-like"/>
    <property type="match status" value="1"/>
</dbReference>
<dbReference type="InterPro" id="IPR008598">
    <property type="entry name" value="Di19_Zn-bd"/>
</dbReference>
<dbReference type="InterPro" id="IPR001356">
    <property type="entry name" value="HD"/>
</dbReference>
<dbReference type="InterPro" id="IPR009057">
    <property type="entry name" value="Homeodomain-like_sf"/>
</dbReference>
<dbReference type="InterPro" id="IPR036236">
    <property type="entry name" value="Znf_C2H2_sf"/>
</dbReference>
<dbReference type="InterPro" id="IPR013087">
    <property type="entry name" value="Znf_C2H2_type"/>
</dbReference>
<dbReference type="InterPro" id="IPR051574">
    <property type="entry name" value="ZnF_E-box_Homeobox"/>
</dbReference>
<dbReference type="PANTHER" id="PTHR24391">
    <property type="entry name" value="HISTONE H4 TRANSCRIPTION FACTOR-RELATED"/>
    <property type="match status" value="1"/>
</dbReference>
<dbReference type="PANTHER" id="PTHR24391:SF11">
    <property type="entry name" value="ZINC FINGER E-BOX-BINDING HOMEOBOX 2"/>
    <property type="match status" value="1"/>
</dbReference>
<dbReference type="Pfam" id="PF00096">
    <property type="entry name" value="zf-C2H2"/>
    <property type="match status" value="4"/>
</dbReference>
<dbReference type="Pfam" id="PF05605">
    <property type="entry name" value="zf-Di19"/>
    <property type="match status" value="1"/>
</dbReference>
<dbReference type="SMART" id="SM00389">
    <property type="entry name" value="HOX"/>
    <property type="match status" value="1"/>
</dbReference>
<dbReference type="SMART" id="SM00355">
    <property type="entry name" value="ZnF_C2H2"/>
    <property type="match status" value="8"/>
</dbReference>
<dbReference type="SUPFAM" id="SSF57667">
    <property type="entry name" value="beta-beta-alpha zinc fingers"/>
    <property type="match status" value="4"/>
</dbReference>
<dbReference type="SUPFAM" id="SSF46689">
    <property type="entry name" value="Homeodomain-like"/>
    <property type="match status" value="1"/>
</dbReference>
<dbReference type="PROSITE" id="PS00028">
    <property type="entry name" value="ZINC_FINGER_C2H2_1"/>
    <property type="match status" value="5"/>
</dbReference>
<dbReference type="PROSITE" id="PS50157">
    <property type="entry name" value="ZINC_FINGER_C2H2_2"/>
    <property type="match status" value="6"/>
</dbReference>
<protein>
    <recommendedName>
        <fullName>Zinc finger E-box-binding homeobox 2</fullName>
    </recommendedName>
    <alternativeName>
        <fullName evidence="13">Smad-interacting protein 1</fullName>
        <shortName evidence="13">SMADIP1</shortName>
    </alternativeName>
    <alternativeName>
        <fullName>Zinc finger homeobox protein 1b</fullName>
    </alternativeName>
</protein>
<organism>
    <name type="scientific">Homo sapiens</name>
    <name type="common">Human</name>
    <dbReference type="NCBI Taxonomy" id="9606"/>
    <lineage>
        <taxon>Eukaryota</taxon>
        <taxon>Metazoa</taxon>
        <taxon>Chordata</taxon>
        <taxon>Craniata</taxon>
        <taxon>Vertebrata</taxon>
        <taxon>Euteleostomi</taxon>
        <taxon>Mammalia</taxon>
        <taxon>Eutheria</taxon>
        <taxon>Euarchontoglires</taxon>
        <taxon>Primates</taxon>
        <taxon>Haplorrhini</taxon>
        <taxon>Catarrhini</taxon>
        <taxon>Hominidae</taxon>
        <taxon>Homo</taxon>
    </lineage>
</organism>
<comment type="function">
    <text evidence="8 11">Transcriptional inhibitor that binds to DNA sequence 5'-CACCT-3' in different promoters (PubMed:16061479, PubMed:20516212). Represses transcription of E-cadherin (PubMed:16061479). Represses expression of MEOX2 (PubMed:20516212).</text>
</comment>
<comment type="subunit">
    <text evidence="1 8">Binds activated SMAD1, activated SMAD2 and activated SMAD3; binding with SMAD4 is not detected (By similarity). Interacts with CBX4 and CTBP1.</text>
</comment>
<comment type="interaction">
    <interactant intactId="EBI-717614">
        <id>O60315</id>
    </interactant>
    <interactant intactId="EBI-744366">
        <id>Q96KQ7</id>
        <label>EHMT2</label>
    </interactant>
    <organismsDiffer>false</organismsDiffer>
    <experiments>6</experiments>
</comment>
<comment type="interaction">
    <interactant intactId="EBI-717614">
        <id>O60315</id>
    </interactant>
    <interactant intactId="EBI-714236">
        <id>Q13330</id>
        <label>MTA1</label>
    </interactant>
    <organismsDiffer>false</organismsDiffer>
    <experiments>12</experiments>
</comment>
<comment type="interaction">
    <interactant intactId="EBI-717614">
        <id>O60315</id>
    </interactant>
    <interactant intactId="EBI-1783035">
        <id>O94776</id>
        <label>MTA2</label>
    </interactant>
    <organismsDiffer>false</organismsDiffer>
    <experiments>4</experiments>
</comment>
<comment type="subcellular location">
    <subcellularLocation>
        <location evidence="8 12">Nucleus</location>
    </subcellularLocation>
    <subcellularLocation>
        <location evidence="11">Chromosome</location>
    </subcellularLocation>
</comment>
<comment type="alternative products">
    <event type="alternative splicing"/>
    <isoform>
        <id>O60315-1</id>
        <name>1</name>
        <sequence type="displayed"/>
    </isoform>
    <isoform>
        <id>O60315-2</id>
        <name>2</name>
        <sequence type="described" ref="VSP_044797"/>
    </isoform>
</comment>
<comment type="induction">
    <text evidence="11">Down-regulated by microRNA-221 (miR-221).</text>
</comment>
<comment type="PTM">
    <text evidence="8">Sumoylation on Lys-391 and Lys-866 is promoted by the E3 SUMO-protein ligase CBX4, and impairs interaction with CTBP1 and transcription repression activity.</text>
</comment>
<comment type="disease" evidence="5 6 7 9">
    <disease id="DI-01749">
        <name>Mowat-Wilson syndrome</name>
        <acronym>MOWS</acronym>
        <description>A complex developmental disorder characterized by intellectual disability, delayed motor development, epilepsy, microcephaly and a wide spectrum of clinically heterogeneous features suggestive of neurocristopathies at the cephalic, cardiac, and vagal levels. Affected patients show an easily recognizable facial appearance with deep set eyes and hypertelorism, medially divergent, broad eyebrows, prominent columella, pointed chin and uplifted, notched ear lobes. Some patients manifest Hirschsprung disease.</description>
        <dbReference type="MIM" id="235730"/>
    </disease>
    <text>The disease is caused by variants affecting the gene represented in this entry.</text>
</comment>
<comment type="similarity">
    <text evidence="16">Belongs to the delta-EF1/ZFH-1 C2H2-type zinc-finger family.</text>
</comment>
<comment type="sequence caution" evidence="16">
    <conflict type="erroneous initiation">
        <sequence resource="EMBL-CDS" id="BAA25495"/>
    </conflict>
    <text>Extended N-terminus.</text>
</comment>